<keyword id="KW-0027">Amidation</keyword>
<keyword id="KW-1015">Disulfide bond</keyword>
<keyword id="KW-0872">Ion channel impairing toxin</keyword>
<keyword id="KW-0528">Neurotoxin</keyword>
<keyword id="KW-0964">Secreted</keyword>
<keyword id="KW-0732">Signal</keyword>
<keyword id="KW-0800">Toxin</keyword>
<keyword id="KW-0738">Voltage-gated sodium channel impairing toxin</keyword>
<dbReference type="SMR" id="P68726"/>
<dbReference type="GO" id="GO:0005576">
    <property type="term" value="C:extracellular region"/>
    <property type="evidence" value="ECO:0007669"/>
    <property type="project" value="UniProtKB-SubCell"/>
</dbReference>
<dbReference type="GO" id="GO:0019871">
    <property type="term" value="F:sodium channel inhibitor activity"/>
    <property type="evidence" value="ECO:0007669"/>
    <property type="project" value="InterPro"/>
</dbReference>
<dbReference type="GO" id="GO:0090729">
    <property type="term" value="F:toxin activity"/>
    <property type="evidence" value="ECO:0007669"/>
    <property type="project" value="UniProtKB-KW"/>
</dbReference>
<dbReference type="GO" id="GO:0006952">
    <property type="term" value="P:defense response"/>
    <property type="evidence" value="ECO:0007669"/>
    <property type="project" value="InterPro"/>
</dbReference>
<dbReference type="CDD" id="cd23106">
    <property type="entry name" value="neurotoxins_LC_scorpion"/>
    <property type="match status" value="1"/>
</dbReference>
<dbReference type="FunFam" id="3.30.30.10:FF:000002">
    <property type="entry name" value="Alpha-like toxin BmK-M1"/>
    <property type="match status" value="1"/>
</dbReference>
<dbReference type="Gene3D" id="3.30.30.10">
    <property type="entry name" value="Knottin, scorpion toxin-like"/>
    <property type="match status" value="1"/>
</dbReference>
<dbReference type="InterPro" id="IPR044062">
    <property type="entry name" value="LCN-type_CS_alpha_beta_dom"/>
</dbReference>
<dbReference type="InterPro" id="IPR003614">
    <property type="entry name" value="Scorpion_toxin-like"/>
</dbReference>
<dbReference type="InterPro" id="IPR036574">
    <property type="entry name" value="Scorpion_toxin-like_sf"/>
</dbReference>
<dbReference type="InterPro" id="IPR018218">
    <property type="entry name" value="Scorpion_toxinL"/>
</dbReference>
<dbReference type="InterPro" id="IPR002061">
    <property type="entry name" value="Scorpion_toxinL/defensin"/>
</dbReference>
<dbReference type="Pfam" id="PF00537">
    <property type="entry name" value="Toxin_3"/>
    <property type="match status" value="1"/>
</dbReference>
<dbReference type="PRINTS" id="PR00285">
    <property type="entry name" value="SCORPNTOXIN"/>
</dbReference>
<dbReference type="SMART" id="SM00505">
    <property type="entry name" value="Knot1"/>
    <property type="match status" value="1"/>
</dbReference>
<dbReference type="SUPFAM" id="SSF57095">
    <property type="entry name" value="Scorpion toxin-like"/>
    <property type="match status" value="1"/>
</dbReference>
<dbReference type="PROSITE" id="PS51863">
    <property type="entry name" value="LCN_CSAB"/>
    <property type="match status" value="1"/>
</dbReference>
<proteinExistence type="evidence at protein level"/>
<evidence type="ECO:0000250" key="1"/>
<evidence type="ECO:0000255" key="2">
    <source>
        <dbReference type="PROSITE-ProRule" id="PRU01210"/>
    </source>
</evidence>
<evidence type="ECO:0000305" key="3"/>
<feature type="signal peptide" evidence="1">
    <location>
        <begin position="1"/>
        <end position="21"/>
    </location>
</feature>
<feature type="chain" id="PRO_0000035195" description="Insect toxin 2-53">
    <location>
        <begin position="22"/>
        <end position="82"/>
    </location>
</feature>
<feature type="domain" description="LCN-type CS-alpha/beta" evidence="2">
    <location>
        <begin position="22"/>
        <end position="82"/>
    </location>
</feature>
<feature type="modified residue" description="Glycine amide" evidence="1">
    <location>
        <position position="82"/>
    </location>
</feature>
<feature type="disulfide bond" evidence="2">
    <location>
        <begin position="31"/>
        <end position="81"/>
    </location>
</feature>
<feature type="disulfide bond" evidence="2">
    <location>
        <begin position="35"/>
        <end position="56"/>
    </location>
</feature>
<feature type="disulfide bond" evidence="2">
    <location>
        <begin position="42"/>
        <end position="63"/>
    </location>
</feature>
<feature type="disulfide bond" evidence="2">
    <location>
        <begin position="46"/>
        <end position="65"/>
    </location>
</feature>
<comment type="function">
    <text evidence="1">Depressant insect toxins cause a transient contraction paralysis followed by a slow flaccid paralysis. They bind voltage-independently to sodium channels (Nav) and block action potentials, primarily by depolarizing the axonal membrane and suppressing the sodium current (By similarity).</text>
</comment>
<comment type="subcellular location">
    <subcellularLocation>
        <location>Secreted</location>
    </subcellularLocation>
</comment>
<comment type="tissue specificity">
    <text>Expressed by the venom gland.</text>
</comment>
<comment type="domain">
    <text evidence="3">Has the structural arrangement of an alpha-helix connected to antiparallel beta-sheets by disulfide bonds (CS-alpha/beta).</text>
</comment>
<comment type="similarity">
    <text evidence="3">Belongs to the long (4 C-C) scorpion toxin superfamily. Sodium channel inhibitor family. Beta subfamily.</text>
</comment>
<reference key="1">
    <citation type="journal article" date="1999" name="J. Mol. Evol.">
        <title>Dynamic diversification from a putative common ancestor of scorpion toxins affecting sodium, potassium, and chloride channels.</title>
        <authorList>
            <person name="Froy O."/>
            <person name="Sagiv T."/>
            <person name="Poreh M."/>
            <person name="Urbach D."/>
            <person name="Zilberberg N."/>
            <person name="Gurevitz M."/>
        </authorList>
    </citation>
    <scope>NUCLEOTIDE SEQUENCE [GENOMIC DNA]</scope>
</reference>
<reference key="2">
    <citation type="journal article" date="2006" name="Toxicon">
        <title>Moving pieces in a taxonomic puzzle: venom 2D-LC/MS and data clustering analyses to infer phylogenetic relationships in some scorpions from the Buthidae family (Scorpiones).</title>
        <authorList>
            <person name="Nascimento D.G."/>
            <person name="Rates B."/>
            <person name="Santos D.M."/>
            <person name="Verano-Braga T."/>
            <person name="Barbosa-Silva A."/>
            <person name="Dutra A.A.A."/>
            <person name="Biondi I."/>
            <person name="Martin-Eauclaire M.-F."/>
            <person name="De Lima M.E."/>
            <person name="Pimenta A.M.C."/>
        </authorList>
    </citation>
    <scope>IDENTIFICATION BY MASS SPECTROMETRY</scope>
</reference>
<sequence>MKLLLLLIVSASMLIESLVNADGYIKRRDGCKVACLVGNEGCDKECKAYGGSYGYCWTWGLACWCEGLPDDKTWKSETNTCGGKK</sequence>
<organism>
    <name type="scientific">Leiurus hebraeus</name>
    <name type="common">Hebrew deathstalker scorpion</name>
    <name type="synonym">Leiurus quinquestriatus hebraeus</name>
    <dbReference type="NCBI Taxonomy" id="2899558"/>
    <lineage>
        <taxon>Eukaryota</taxon>
        <taxon>Metazoa</taxon>
        <taxon>Ecdysozoa</taxon>
        <taxon>Arthropoda</taxon>
        <taxon>Chelicerata</taxon>
        <taxon>Arachnida</taxon>
        <taxon>Scorpiones</taxon>
        <taxon>Buthida</taxon>
        <taxon>Buthoidea</taxon>
        <taxon>Buthidae</taxon>
        <taxon>Leiurus</taxon>
    </lineage>
</organism>
<protein>
    <recommendedName>
        <fullName>Insect toxin 2-53</fullName>
    </recommendedName>
    <alternativeName>
        <fullName>LqhIT2-53</fullName>
    </alternativeName>
</protein>
<name>SX25_LEIHE</name>
<accession>P68726</accession>